<name>CADH4_RAT</name>
<comment type="function">
    <text>Cadherins are calcium-dependent cell adhesion proteins. They preferentially interact with themselves in a homophilic manner in connecting cells; cadherins may thus contribute to the sorting of heterogeneous cell types. May play an important role in retinal development.</text>
</comment>
<comment type="subcellular location">
    <subcellularLocation>
        <location evidence="4">Cell membrane</location>
        <topology evidence="4">Single-pass type I membrane protein</topology>
    </subcellularLocation>
</comment>
<comment type="domain">
    <text evidence="1">Three calcium ions are usually bound at the interface of each cadherin domain and rigidify the connections, imparting a strong curvature to the full-length ectodomain.</text>
</comment>
<keyword id="KW-0106">Calcium</keyword>
<keyword id="KW-0130">Cell adhesion</keyword>
<keyword id="KW-1003">Cell membrane</keyword>
<keyword id="KW-0325">Glycoprotein</keyword>
<keyword id="KW-0472">Membrane</keyword>
<keyword id="KW-0479">Metal-binding</keyword>
<keyword id="KW-1185">Reference proteome</keyword>
<keyword id="KW-0677">Repeat</keyword>
<keyword id="KW-0812">Transmembrane</keyword>
<evidence type="ECO:0000250" key="1"/>
<evidence type="ECO:0000255" key="2"/>
<evidence type="ECO:0000255" key="3">
    <source>
        <dbReference type="PROSITE-ProRule" id="PRU00043"/>
    </source>
</evidence>
<evidence type="ECO:0000305" key="4"/>
<reference key="1">
    <citation type="submission" date="1996-07" db="EMBL/GenBank/DDBJ databases">
        <title>R-cadherin expression in the rat retina during postnatal development.</title>
        <authorList>
            <person name="Yanagita T."/>
        </authorList>
    </citation>
    <scope>NUCLEOTIDE SEQUENCE [MRNA]</scope>
    <source>
        <tissue>Retina</tissue>
    </source>
</reference>
<feature type="chain" id="PRO_0000126644" description="Cadherin-4">
    <location>
        <begin position="1" status="less than"/>
        <end position="296" status="greater than"/>
    </location>
</feature>
<feature type="topological domain" description="Extracellular" evidence="2">
    <location>
        <begin position="1" status="less than"/>
        <end position="296" status="greater than"/>
    </location>
</feature>
<feature type="domain" description="Cadherin 1" evidence="3">
    <location>
        <begin position="1" status="less than"/>
        <end position="101"/>
    </location>
</feature>
<feature type="domain" description="Cadherin 2" evidence="3">
    <location>
        <begin position="102"/>
        <end position="216"/>
    </location>
</feature>
<feature type="domain" description="Cadherin 3" evidence="3">
    <location>
        <begin position="217"/>
        <end position="296" status="greater than"/>
    </location>
</feature>
<feature type="glycosylation site" description="N-linked (GlcNAc...) asparagine" evidence="2">
    <location>
        <position position="107"/>
    </location>
</feature>
<feature type="glycosylation site" description="N-linked (GlcNAc...) asparagine" evidence="2">
    <location>
        <position position="236"/>
    </location>
</feature>
<feature type="non-terminal residue">
    <location>
        <position position="1"/>
    </location>
</feature>
<feature type="non-terminal residue">
    <location>
        <position position="296"/>
    </location>
</feature>
<proteinExistence type="evidence at transcript level"/>
<organism>
    <name type="scientific">Rattus norvegicus</name>
    <name type="common">Rat</name>
    <dbReference type="NCBI Taxonomy" id="10116"/>
    <lineage>
        <taxon>Eukaryota</taxon>
        <taxon>Metazoa</taxon>
        <taxon>Chordata</taxon>
        <taxon>Craniata</taxon>
        <taxon>Vertebrata</taxon>
        <taxon>Euteleostomi</taxon>
        <taxon>Mammalia</taxon>
        <taxon>Eutheria</taxon>
        <taxon>Euarchontoglires</taxon>
        <taxon>Glires</taxon>
        <taxon>Rodentia</taxon>
        <taxon>Myomorpha</taxon>
        <taxon>Muroidea</taxon>
        <taxon>Muridae</taxon>
        <taxon>Murinae</taxon>
        <taxon>Rattus</taxon>
    </lineage>
</organism>
<protein>
    <recommendedName>
        <fullName>Cadherin-4</fullName>
    </recommendedName>
    <alternativeName>
        <fullName>Retinal cadherin</fullName>
        <shortName>R-CAD</shortName>
        <shortName>R-cadherin</shortName>
    </alternativeName>
</protein>
<sequence length="296" mass="32912">NVPENSRGPFPQQLVRIRSDKDNDIPIRYSITGVGADQPPMEVFNIDSMSGRMYVTRPMDREERASYHLRAHAVDMNGNKVENPIDLYIYVIDMNDNRPEFINQVYNGSVDEGSKPGTYVMTVTANDADDSTTANGMVRYRIVTQTPQSPSQNMFTINSETGDIVTVAAGLDREKVQQYTVIVQATDMEGNLNYGLSNTATAIITVTDVNDNPPEFTTSTFAGEVPENRIETVVANLTVMDRDQPHSPNWNAVYRIISGDPSGHFSVRTDPVTNEGMVTVVKAVDYELNRAFMLTI</sequence>
<dbReference type="EMBL" id="D86742">
    <property type="protein sequence ID" value="BAA13166.1"/>
    <property type="molecule type" value="mRNA"/>
</dbReference>
<dbReference type="SMR" id="Q63149"/>
<dbReference type="STRING" id="10116.ENSRNOP00000074038"/>
<dbReference type="GlyCosmos" id="Q63149">
    <property type="glycosylation" value="2 sites, No reported glycans"/>
</dbReference>
<dbReference type="GlyGen" id="Q63149">
    <property type="glycosylation" value="2 sites"/>
</dbReference>
<dbReference type="iPTMnet" id="Q63149"/>
<dbReference type="PhosphoSitePlus" id="Q63149"/>
<dbReference type="AGR" id="RGD:621091"/>
<dbReference type="RGD" id="621091">
    <property type="gene designation" value="Cdh4"/>
</dbReference>
<dbReference type="InParanoid" id="Q63149"/>
<dbReference type="PhylomeDB" id="Q63149"/>
<dbReference type="Proteomes" id="UP000002494">
    <property type="component" value="Unplaced"/>
</dbReference>
<dbReference type="GO" id="GO:0005886">
    <property type="term" value="C:plasma membrane"/>
    <property type="evidence" value="ECO:0000266"/>
    <property type="project" value="RGD"/>
</dbReference>
<dbReference type="GO" id="GO:0005509">
    <property type="term" value="F:calcium ion binding"/>
    <property type="evidence" value="ECO:0007669"/>
    <property type="project" value="InterPro"/>
</dbReference>
<dbReference type="GO" id="GO:0048675">
    <property type="term" value="P:axon extension"/>
    <property type="evidence" value="ECO:0000266"/>
    <property type="project" value="RGD"/>
</dbReference>
<dbReference type="GO" id="GO:0007411">
    <property type="term" value="P:axon guidance"/>
    <property type="evidence" value="ECO:0000266"/>
    <property type="project" value="RGD"/>
</dbReference>
<dbReference type="GO" id="GO:0007157">
    <property type="term" value="P:heterophilic cell-cell adhesion via plasma membrane cell adhesion molecules"/>
    <property type="evidence" value="ECO:0000266"/>
    <property type="project" value="RGD"/>
</dbReference>
<dbReference type="GO" id="GO:0007156">
    <property type="term" value="P:homophilic cell adhesion via plasma membrane adhesion molecules"/>
    <property type="evidence" value="ECO:0000266"/>
    <property type="project" value="RGD"/>
</dbReference>
<dbReference type="GO" id="GO:0045773">
    <property type="term" value="P:positive regulation of axon extension"/>
    <property type="evidence" value="ECO:0000266"/>
    <property type="project" value="RGD"/>
</dbReference>
<dbReference type="CDD" id="cd11304">
    <property type="entry name" value="Cadherin_repeat"/>
    <property type="match status" value="2"/>
</dbReference>
<dbReference type="FunFam" id="2.60.40.60:FF:000011">
    <property type="entry name" value="Cadherin 1"/>
    <property type="match status" value="1"/>
</dbReference>
<dbReference type="FunFam" id="2.60.40.60:FF:000022">
    <property type="entry name" value="Cadherin 2"/>
    <property type="match status" value="1"/>
</dbReference>
<dbReference type="FunFam" id="2.60.40.60:FF:000615">
    <property type="entry name" value="Cadherin-2"/>
    <property type="match status" value="1"/>
</dbReference>
<dbReference type="Gene3D" id="2.60.40.60">
    <property type="entry name" value="Cadherins"/>
    <property type="match status" value="3"/>
</dbReference>
<dbReference type="InterPro" id="IPR039808">
    <property type="entry name" value="Cadherin"/>
</dbReference>
<dbReference type="InterPro" id="IPR002126">
    <property type="entry name" value="Cadherin-like_dom"/>
</dbReference>
<dbReference type="InterPro" id="IPR015919">
    <property type="entry name" value="Cadherin-like_sf"/>
</dbReference>
<dbReference type="InterPro" id="IPR020894">
    <property type="entry name" value="Cadherin_CS"/>
</dbReference>
<dbReference type="PANTHER" id="PTHR24027">
    <property type="entry name" value="CADHERIN-23"/>
    <property type="match status" value="1"/>
</dbReference>
<dbReference type="PANTHER" id="PTHR24027:SF81">
    <property type="entry name" value="CADHERIN-4"/>
    <property type="match status" value="1"/>
</dbReference>
<dbReference type="Pfam" id="PF00028">
    <property type="entry name" value="Cadherin"/>
    <property type="match status" value="3"/>
</dbReference>
<dbReference type="PRINTS" id="PR00205">
    <property type="entry name" value="CADHERIN"/>
</dbReference>
<dbReference type="SMART" id="SM00112">
    <property type="entry name" value="CA"/>
    <property type="match status" value="2"/>
</dbReference>
<dbReference type="SUPFAM" id="SSF49313">
    <property type="entry name" value="Cadherin-like"/>
    <property type="match status" value="3"/>
</dbReference>
<dbReference type="PROSITE" id="PS00232">
    <property type="entry name" value="CADHERIN_1"/>
    <property type="match status" value="2"/>
</dbReference>
<dbReference type="PROSITE" id="PS50268">
    <property type="entry name" value="CADHERIN_2"/>
    <property type="match status" value="3"/>
</dbReference>
<accession>Q63149</accession>
<gene>
    <name type="primary">Cdh4</name>
</gene>